<dbReference type="EC" id="2.1.1.228" evidence="1"/>
<dbReference type="EMBL" id="CP000890">
    <property type="protein sequence ID" value="ABX77678.1"/>
    <property type="molecule type" value="Genomic_DNA"/>
</dbReference>
<dbReference type="RefSeq" id="WP_012220218.1">
    <property type="nucleotide sequence ID" value="NC_010117.1"/>
</dbReference>
<dbReference type="SMR" id="A9NBQ9"/>
<dbReference type="KEGG" id="cbs:COXBURSA331_A0550"/>
<dbReference type="HOGENOM" id="CLU_047363_0_1_6"/>
<dbReference type="GO" id="GO:0005829">
    <property type="term" value="C:cytosol"/>
    <property type="evidence" value="ECO:0007669"/>
    <property type="project" value="TreeGrafter"/>
</dbReference>
<dbReference type="GO" id="GO:0052906">
    <property type="term" value="F:tRNA (guanine(37)-N1)-methyltransferase activity"/>
    <property type="evidence" value="ECO:0007669"/>
    <property type="project" value="UniProtKB-UniRule"/>
</dbReference>
<dbReference type="GO" id="GO:0002939">
    <property type="term" value="P:tRNA N1-guanine methylation"/>
    <property type="evidence" value="ECO:0007669"/>
    <property type="project" value="TreeGrafter"/>
</dbReference>
<dbReference type="CDD" id="cd18080">
    <property type="entry name" value="TrmD-like"/>
    <property type="match status" value="1"/>
</dbReference>
<dbReference type="FunFam" id="1.10.1270.20:FF:000001">
    <property type="entry name" value="tRNA (guanine-N(1)-)-methyltransferase"/>
    <property type="match status" value="1"/>
</dbReference>
<dbReference type="FunFam" id="3.40.1280.10:FF:000001">
    <property type="entry name" value="tRNA (guanine-N(1)-)-methyltransferase"/>
    <property type="match status" value="1"/>
</dbReference>
<dbReference type="Gene3D" id="3.40.1280.10">
    <property type="match status" value="1"/>
</dbReference>
<dbReference type="Gene3D" id="1.10.1270.20">
    <property type="entry name" value="tRNA(m1g37)methyltransferase, domain 2"/>
    <property type="match status" value="1"/>
</dbReference>
<dbReference type="HAMAP" id="MF_00605">
    <property type="entry name" value="TrmD"/>
    <property type="match status" value="1"/>
</dbReference>
<dbReference type="InterPro" id="IPR029028">
    <property type="entry name" value="Alpha/beta_knot_MTases"/>
</dbReference>
<dbReference type="InterPro" id="IPR023148">
    <property type="entry name" value="tRNA_m1G_MeTrfase_C_sf"/>
</dbReference>
<dbReference type="InterPro" id="IPR002649">
    <property type="entry name" value="tRNA_m1G_MeTrfase_TrmD"/>
</dbReference>
<dbReference type="InterPro" id="IPR029026">
    <property type="entry name" value="tRNA_m1G_MTases_N"/>
</dbReference>
<dbReference type="InterPro" id="IPR016009">
    <property type="entry name" value="tRNA_MeTrfase_TRMD/TRM10"/>
</dbReference>
<dbReference type="NCBIfam" id="NF000648">
    <property type="entry name" value="PRK00026.1"/>
    <property type="match status" value="1"/>
</dbReference>
<dbReference type="NCBIfam" id="TIGR00088">
    <property type="entry name" value="trmD"/>
    <property type="match status" value="1"/>
</dbReference>
<dbReference type="PANTHER" id="PTHR46417">
    <property type="entry name" value="TRNA (GUANINE-N(1)-)-METHYLTRANSFERASE"/>
    <property type="match status" value="1"/>
</dbReference>
<dbReference type="PANTHER" id="PTHR46417:SF1">
    <property type="entry name" value="TRNA (GUANINE-N(1)-)-METHYLTRANSFERASE"/>
    <property type="match status" value="1"/>
</dbReference>
<dbReference type="Pfam" id="PF01746">
    <property type="entry name" value="tRNA_m1G_MT"/>
    <property type="match status" value="1"/>
</dbReference>
<dbReference type="PIRSF" id="PIRSF000386">
    <property type="entry name" value="tRNA_mtase"/>
    <property type="match status" value="1"/>
</dbReference>
<dbReference type="SUPFAM" id="SSF75217">
    <property type="entry name" value="alpha/beta knot"/>
    <property type="match status" value="1"/>
</dbReference>
<comment type="function">
    <text evidence="1">Specifically methylates guanosine-37 in various tRNAs.</text>
</comment>
<comment type="catalytic activity">
    <reaction evidence="1">
        <text>guanosine(37) in tRNA + S-adenosyl-L-methionine = N(1)-methylguanosine(37) in tRNA + S-adenosyl-L-homocysteine + H(+)</text>
        <dbReference type="Rhea" id="RHEA:36899"/>
        <dbReference type="Rhea" id="RHEA-COMP:10145"/>
        <dbReference type="Rhea" id="RHEA-COMP:10147"/>
        <dbReference type="ChEBI" id="CHEBI:15378"/>
        <dbReference type="ChEBI" id="CHEBI:57856"/>
        <dbReference type="ChEBI" id="CHEBI:59789"/>
        <dbReference type="ChEBI" id="CHEBI:73542"/>
        <dbReference type="ChEBI" id="CHEBI:74269"/>
        <dbReference type="EC" id="2.1.1.228"/>
    </reaction>
</comment>
<comment type="subunit">
    <text evidence="1">Homodimer.</text>
</comment>
<comment type="subcellular location">
    <subcellularLocation>
        <location evidence="1">Cytoplasm</location>
    </subcellularLocation>
</comment>
<comment type="similarity">
    <text evidence="1">Belongs to the RNA methyltransferase TrmD family.</text>
</comment>
<organism>
    <name type="scientific">Coxiella burnetii (strain RSA 331 / Henzerling II)</name>
    <dbReference type="NCBI Taxonomy" id="360115"/>
    <lineage>
        <taxon>Bacteria</taxon>
        <taxon>Pseudomonadati</taxon>
        <taxon>Pseudomonadota</taxon>
        <taxon>Gammaproteobacteria</taxon>
        <taxon>Legionellales</taxon>
        <taxon>Coxiellaceae</taxon>
        <taxon>Coxiella</taxon>
    </lineage>
</organism>
<evidence type="ECO:0000255" key="1">
    <source>
        <dbReference type="HAMAP-Rule" id="MF_00605"/>
    </source>
</evidence>
<protein>
    <recommendedName>
        <fullName evidence="1">tRNA (guanine-N(1)-)-methyltransferase</fullName>
        <ecNumber evidence="1">2.1.1.228</ecNumber>
    </recommendedName>
    <alternativeName>
        <fullName evidence="1">M1G-methyltransferase</fullName>
    </alternativeName>
    <alternativeName>
        <fullName evidence="1">tRNA [GM37] methyltransferase</fullName>
    </alternativeName>
</protein>
<name>TRMD_COXBR</name>
<feature type="chain" id="PRO_1000082515" description="tRNA (guanine-N(1)-)-methyltransferase">
    <location>
        <begin position="1"/>
        <end position="246"/>
    </location>
</feature>
<feature type="binding site" evidence="1">
    <location>
        <position position="114"/>
    </location>
    <ligand>
        <name>S-adenosyl-L-methionine</name>
        <dbReference type="ChEBI" id="CHEBI:59789"/>
    </ligand>
</feature>
<feature type="binding site" evidence="1">
    <location>
        <begin position="134"/>
        <end position="139"/>
    </location>
    <ligand>
        <name>S-adenosyl-L-methionine</name>
        <dbReference type="ChEBI" id="CHEBI:59789"/>
    </ligand>
</feature>
<sequence length="246" mass="27671">MKLIIGVITLFPQMFDALKSGVIGRALKQDRLTLSFWNPRDYATDPHRTVDDRPYGGGPGMVMKFEPLALALKAAKAQLGENTKVIHLTPQGKLLTQAIVREKIHASPLILLAGRYEGIDERLIEAEVDEEWSIGDYILSGGELPAMVLIDAMTRLLPGVLGHKDSASQDSFTAGLLDYLHYTRPEKIADRPVPSVLLSGDHEAISRWRLKQSLGRTWQRRQDLIKRRSLSENEQRLLDEFFEESS</sequence>
<gene>
    <name evidence="1" type="primary">trmD</name>
    <name type="ordered locus">COXBURSA331_A0550</name>
</gene>
<accession>A9NBQ9</accession>
<reference key="1">
    <citation type="submission" date="2007-11" db="EMBL/GenBank/DDBJ databases">
        <title>Genome sequencing of phylogenetically and phenotypically diverse Coxiella burnetii isolates.</title>
        <authorList>
            <person name="Seshadri R."/>
            <person name="Samuel J.E."/>
        </authorList>
    </citation>
    <scope>NUCLEOTIDE SEQUENCE [LARGE SCALE GENOMIC DNA]</scope>
    <source>
        <strain>RSA 331 / Henzerling II</strain>
    </source>
</reference>
<proteinExistence type="inferred from homology"/>
<keyword id="KW-0963">Cytoplasm</keyword>
<keyword id="KW-0489">Methyltransferase</keyword>
<keyword id="KW-0949">S-adenosyl-L-methionine</keyword>
<keyword id="KW-0808">Transferase</keyword>
<keyword id="KW-0819">tRNA processing</keyword>